<protein>
    <recommendedName>
        <fullName>Probable outer membrane protein PmpE</fullName>
    </recommendedName>
    <alternativeName>
        <fullName>Polymorphic membrane protein E</fullName>
    </alternativeName>
</protein>
<evidence type="ECO:0000255" key="1"/>
<evidence type="ECO:0000255" key="2">
    <source>
        <dbReference type="PROSITE-ProRule" id="PRU00556"/>
    </source>
</evidence>
<evidence type="ECO:0000305" key="3"/>
<dbReference type="EMBL" id="AE001273">
    <property type="protein sequence ID" value="AAC68467.1"/>
    <property type="molecule type" value="Genomic_DNA"/>
</dbReference>
<dbReference type="PIR" id="E71460">
    <property type="entry name" value="E71460"/>
</dbReference>
<dbReference type="RefSeq" id="NP_220391.1">
    <property type="nucleotide sequence ID" value="NC_000117.1"/>
</dbReference>
<dbReference type="RefSeq" id="WP_009872259.1">
    <property type="nucleotide sequence ID" value="NC_000117.1"/>
</dbReference>
<dbReference type="STRING" id="272561.CT_869"/>
<dbReference type="EnsemblBacteria" id="AAC68467">
    <property type="protein sequence ID" value="AAC68467"/>
    <property type="gene ID" value="CT_869"/>
</dbReference>
<dbReference type="GeneID" id="884671"/>
<dbReference type="KEGG" id="ctr:CT_869"/>
<dbReference type="PATRIC" id="fig|272561.5.peg.960"/>
<dbReference type="HOGENOM" id="CLU_004549_2_0_0"/>
<dbReference type="InParanoid" id="O84877"/>
<dbReference type="OrthoDB" id="16673at2"/>
<dbReference type="Proteomes" id="UP000000431">
    <property type="component" value="Chromosome"/>
</dbReference>
<dbReference type="GO" id="GO:0009279">
    <property type="term" value="C:cell outer membrane"/>
    <property type="evidence" value="ECO:0007669"/>
    <property type="project" value="UniProtKB-SubCell"/>
</dbReference>
<dbReference type="GO" id="GO:0005576">
    <property type="term" value="C:extracellular region"/>
    <property type="evidence" value="ECO:0007669"/>
    <property type="project" value="UniProtKB-KW"/>
</dbReference>
<dbReference type="Gene3D" id="2.40.128.130">
    <property type="entry name" value="Autotransporter beta-domain"/>
    <property type="match status" value="1"/>
</dbReference>
<dbReference type="InterPro" id="IPR005546">
    <property type="entry name" value="Autotransporte_beta"/>
</dbReference>
<dbReference type="InterPro" id="IPR036709">
    <property type="entry name" value="Autotransporte_beta_dom_sf"/>
</dbReference>
<dbReference type="InterPro" id="IPR011427">
    <property type="entry name" value="Polymorphic_membr_middle"/>
</dbReference>
<dbReference type="InterPro" id="IPR003368">
    <property type="entry name" value="POMP_repeat"/>
</dbReference>
<dbReference type="NCBIfam" id="TIGR01376">
    <property type="entry name" value="POMP_repeat"/>
    <property type="match status" value="3"/>
</dbReference>
<dbReference type="Pfam" id="PF03797">
    <property type="entry name" value="Autotransporter"/>
    <property type="match status" value="1"/>
</dbReference>
<dbReference type="Pfam" id="PF02415">
    <property type="entry name" value="Chlam_PMP"/>
    <property type="match status" value="2"/>
</dbReference>
<dbReference type="Pfam" id="PF07548">
    <property type="entry name" value="ChlamPMP_M"/>
    <property type="match status" value="1"/>
</dbReference>
<dbReference type="SMART" id="SM00869">
    <property type="entry name" value="Autotransporter"/>
    <property type="match status" value="1"/>
</dbReference>
<dbReference type="SUPFAM" id="SSF103515">
    <property type="entry name" value="Autotransporter"/>
    <property type="match status" value="1"/>
</dbReference>
<dbReference type="PROSITE" id="PS51208">
    <property type="entry name" value="AUTOTRANSPORTER"/>
    <property type="match status" value="1"/>
</dbReference>
<keyword id="KW-0998">Cell outer membrane</keyword>
<keyword id="KW-0134">Cell wall</keyword>
<keyword id="KW-0472">Membrane</keyword>
<keyword id="KW-1185">Reference proteome</keyword>
<keyword id="KW-0964">Secreted</keyword>
<keyword id="KW-0732">Signal</keyword>
<keyword id="KW-0812">Transmembrane</keyword>
<keyword id="KW-1134">Transmembrane beta strand</keyword>
<comment type="subcellular location">
    <subcellularLocation>
        <location>Secreted</location>
        <location>Cell wall</location>
    </subcellularLocation>
    <subcellularLocation>
        <location evidence="3">Cell outer membrane</location>
        <topology evidence="3">Peripheral membrane protein</topology>
        <orientation evidence="3">Extracellular side</orientation>
    </subcellularLocation>
</comment>
<comment type="developmental stage">
    <text>Elementary body.</text>
</comment>
<comment type="similarity">
    <text evidence="3">Belongs to the PMP outer membrane protein family.</text>
</comment>
<gene>
    <name type="primary">pmpE</name>
    <name type="ordered locus">CT_869</name>
</gene>
<name>PMPE_CHLTR</name>
<accession>O84877</accession>
<reference key="1">
    <citation type="journal article" date="1998" name="Science">
        <title>Genome sequence of an obligate intracellular pathogen of humans: Chlamydia trachomatis.</title>
        <authorList>
            <person name="Stephens R.S."/>
            <person name="Kalman S."/>
            <person name="Lammel C.J."/>
            <person name="Fan J."/>
            <person name="Marathe R."/>
            <person name="Aravind L."/>
            <person name="Mitchell W.P."/>
            <person name="Olinger L."/>
            <person name="Tatusov R.L."/>
            <person name="Zhao Q."/>
            <person name="Koonin E.V."/>
            <person name="Davis R.W."/>
        </authorList>
    </citation>
    <scope>NUCLEOTIDE SEQUENCE [LARGE SCALE GENOMIC DNA]</scope>
    <source>
        <strain>ATCC VR-885 / DSM 19411 / UW-3/Cx</strain>
    </source>
</reference>
<organism>
    <name type="scientific">Chlamydia trachomatis serovar D (strain ATCC VR-885 / DSM 19411 / UW-3/Cx)</name>
    <dbReference type="NCBI Taxonomy" id="272561"/>
    <lineage>
        <taxon>Bacteria</taxon>
        <taxon>Pseudomonadati</taxon>
        <taxon>Chlamydiota</taxon>
        <taxon>Chlamydiia</taxon>
        <taxon>Chlamydiales</taxon>
        <taxon>Chlamydiaceae</taxon>
        <taxon>Chlamydia/Chlamydophila group</taxon>
        <taxon>Chlamydia</taxon>
    </lineage>
</organism>
<proteinExistence type="evidence at transcript level"/>
<sequence>MKKAFFFFLIGNSLSGLAREVPSRIFLMPNSVPDPTKESLSNKISLTGDTHNLTNCYLDNLRYILAILQKTPNEGAAVTITDYLSFFDTQKEGIYFAKNLTPESGGAIGYASPNSPTVEIRDTIGPVIFENNTCCRLFTWRNPYAADKIREGGAIHAQNLYINHNHDVVGFMKNFSYVQGGAISTANTFVVSENQSCFLFMDNICIQTNTAGKGGAIYAGTSNSFESNNCDLFFINNACCAGGAIFSPICSLTGNRGNIVFYNNRCFKNVETASSEASDGGAIKVTTRLDVTGNRGRIFFSDNITKNYGGAIYAPVVTLVDNGPTYFINNIANNKGGAIYIDGTSNSKISADRHAIIFNENIVTNVTNANGTSTSANPPRRNAITVASSSGEILLGAGSSQNLIFYDPIEVSNAGVSVSFNKEADQTGSVVFSGATVNSADFHQRNLQTKTPAPLTLSNGFLCIEDHAQLTVNRFTQTGGVVSLGNGAVLSCYKNGTGDSASNASITLKHIGLNLSSILKSGAEIPLLWVEPTNNSNNYTADTAATFSLSDVKLSLIDDYGNSPYESTDLTHALSSQPMLSISEASDNQLQSENIDFSGLNVPHYGWQGLWTWGWAKTQDPEPASSATITDPQKANRFHRTLLLTWLPAGYVPSPKHRSPLIANTLWGNMLLATESLKNSAELTPSGHPFWGITGGGLGMMVYQDPRENHPGFHMRSSGYSAGMIAGQTHTFSLKFSQTYTKLNERYAKNNVSSKNYSCQGEMLFSLQEGFLLTKLVGLYSYGDHNCHHFYTQGENLTSQGTFRSQTMGGAVFFDLPMKPFGSTHILTAPFLGALGIYSSLSHFTEVGAYPRSFSTKTPLINVLVPIGVKGSFMNATHRPQAWTVELAYQPVLYRQEPGIAAQLLASKGIWFGSGSPSSRHAMSYKISQQTQPLSWLTLHFQYHGFYSSSTFCNYLNGEIALRF</sequence>
<feature type="signal peptide" evidence="1">
    <location>
        <begin position="1"/>
        <end position="18"/>
    </location>
</feature>
<feature type="chain" id="PRO_0000024725" description="Probable outer membrane protein PmpE">
    <location>
        <begin position="19"/>
        <end position="964"/>
    </location>
</feature>
<feature type="domain" description="Autotransporter" evidence="2">
    <location>
        <begin position="683"/>
        <end position="964"/>
    </location>
</feature>